<dbReference type="EMBL" id="CP000038">
    <property type="protein sequence ID" value="AAZ87448.1"/>
    <property type="molecule type" value="Genomic_DNA"/>
</dbReference>
<dbReference type="RefSeq" id="WP_001295307.1">
    <property type="nucleotide sequence ID" value="NC_007384.1"/>
</dbReference>
<dbReference type="SMR" id="Q3Z464"/>
<dbReference type="GeneID" id="93776744"/>
<dbReference type="KEGG" id="ssn:SSON_0692"/>
<dbReference type="HOGENOM" id="CLU_047123_0_0_6"/>
<dbReference type="Proteomes" id="UP000002529">
    <property type="component" value="Chromosome"/>
</dbReference>
<dbReference type="GO" id="GO:0042597">
    <property type="term" value="C:periplasmic space"/>
    <property type="evidence" value="ECO:0007669"/>
    <property type="project" value="UniProtKB-SubCell"/>
</dbReference>
<dbReference type="GO" id="GO:0051301">
    <property type="term" value="P:cell division"/>
    <property type="evidence" value="ECO:0007669"/>
    <property type="project" value="UniProtKB-UniRule"/>
</dbReference>
<dbReference type="GO" id="GO:0017038">
    <property type="term" value="P:protein import"/>
    <property type="evidence" value="ECO:0007669"/>
    <property type="project" value="InterPro"/>
</dbReference>
<dbReference type="FunFam" id="2.120.10.30:FF:000022">
    <property type="entry name" value="Tol-Pal system protein TolB"/>
    <property type="match status" value="1"/>
</dbReference>
<dbReference type="FunFam" id="3.40.50.10070:FF:000001">
    <property type="entry name" value="Tol-Pal system protein TolB"/>
    <property type="match status" value="1"/>
</dbReference>
<dbReference type="Gene3D" id="2.120.10.30">
    <property type="entry name" value="TolB, C-terminal domain"/>
    <property type="match status" value="1"/>
</dbReference>
<dbReference type="Gene3D" id="3.40.50.10070">
    <property type="entry name" value="TolB, N-terminal domain"/>
    <property type="match status" value="1"/>
</dbReference>
<dbReference type="HAMAP" id="MF_00671">
    <property type="entry name" value="TolB"/>
    <property type="match status" value="1"/>
</dbReference>
<dbReference type="InterPro" id="IPR011042">
    <property type="entry name" value="6-blade_b-propeller_TolB-like"/>
</dbReference>
<dbReference type="InterPro" id="IPR011659">
    <property type="entry name" value="PD40"/>
</dbReference>
<dbReference type="InterPro" id="IPR014167">
    <property type="entry name" value="Tol-Pal_TolB"/>
</dbReference>
<dbReference type="InterPro" id="IPR007195">
    <property type="entry name" value="TolB_N"/>
</dbReference>
<dbReference type="NCBIfam" id="TIGR02800">
    <property type="entry name" value="propeller_TolB"/>
    <property type="match status" value="1"/>
</dbReference>
<dbReference type="PANTHER" id="PTHR36842:SF1">
    <property type="entry name" value="PROTEIN TOLB"/>
    <property type="match status" value="1"/>
</dbReference>
<dbReference type="PANTHER" id="PTHR36842">
    <property type="entry name" value="PROTEIN TOLB HOMOLOG"/>
    <property type="match status" value="1"/>
</dbReference>
<dbReference type="Pfam" id="PF07676">
    <property type="entry name" value="PD40"/>
    <property type="match status" value="4"/>
</dbReference>
<dbReference type="Pfam" id="PF04052">
    <property type="entry name" value="TolB_N"/>
    <property type="match status" value="1"/>
</dbReference>
<dbReference type="SUPFAM" id="SSF52964">
    <property type="entry name" value="TolB, N-terminal domain"/>
    <property type="match status" value="1"/>
</dbReference>
<dbReference type="SUPFAM" id="SSF69304">
    <property type="entry name" value="Tricorn protease N-terminal domain"/>
    <property type="match status" value="1"/>
</dbReference>
<feature type="signal peptide" evidence="1">
    <location>
        <begin position="1"/>
        <end position="21"/>
    </location>
</feature>
<feature type="chain" id="PRO_0000259090" description="Tol-Pal system protein TolB" evidence="1">
    <location>
        <begin position="22"/>
        <end position="430"/>
    </location>
</feature>
<comment type="function">
    <text evidence="1">Part of the Tol-Pal system, which plays a role in outer membrane invagination during cell division and is important for maintaining outer membrane integrity. TolB occupies a key intermediary position in the Tol-Pal system because it communicates directly with both membrane-embedded components, Pal in the outer membrane and TolA in the inner membrane.</text>
</comment>
<comment type="subunit">
    <text evidence="1">The Tol-Pal system is composed of five core proteins: the inner membrane proteins TolA, TolQ and TolR, the periplasmic protein TolB and the outer membrane protein Pal. They form a network linking the inner and outer membranes and the peptidoglycan layer.</text>
</comment>
<comment type="subcellular location">
    <subcellularLocation>
        <location evidence="1">Periplasm</location>
    </subcellularLocation>
</comment>
<comment type="similarity">
    <text evidence="1">Belongs to the TolB family.</text>
</comment>
<keyword id="KW-0131">Cell cycle</keyword>
<keyword id="KW-0132">Cell division</keyword>
<keyword id="KW-0574">Periplasm</keyword>
<keyword id="KW-1185">Reference proteome</keyword>
<keyword id="KW-0732">Signal</keyword>
<evidence type="ECO:0000255" key="1">
    <source>
        <dbReference type="HAMAP-Rule" id="MF_00671"/>
    </source>
</evidence>
<reference key="1">
    <citation type="journal article" date="2005" name="Nucleic Acids Res.">
        <title>Genome dynamics and diversity of Shigella species, the etiologic agents of bacillary dysentery.</title>
        <authorList>
            <person name="Yang F."/>
            <person name="Yang J."/>
            <person name="Zhang X."/>
            <person name="Chen L."/>
            <person name="Jiang Y."/>
            <person name="Yan Y."/>
            <person name="Tang X."/>
            <person name="Wang J."/>
            <person name="Xiong Z."/>
            <person name="Dong J."/>
            <person name="Xue Y."/>
            <person name="Zhu Y."/>
            <person name="Xu X."/>
            <person name="Sun L."/>
            <person name="Chen S."/>
            <person name="Nie H."/>
            <person name="Peng J."/>
            <person name="Xu J."/>
            <person name="Wang Y."/>
            <person name="Yuan Z."/>
            <person name="Wen Y."/>
            <person name="Yao Z."/>
            <person name="Shen Y."/>
            <person name="Qiang B."/>
            <person name="Hou Y."/>
            <person name="Yu J."/>
            <person name="Jin Q."/>
        </authorList>
    </citation>
    <scope>NUCLEOTIDE SEQUENCE [LARGE SCALE GENOMIC DNA]</scope>
    <source>
        <strain>Ss046</strain>
    </source>
</reference>
<protein>
    <recommendedName>
        <fullName evidence="1">Tol-Pal system protein TolB</fullName>
    </recommendedName>
</protein>
<name>TOLB_SHISS</name>
<gene>
    <name evidence="1" type="primary">tolB</name>
    <name type="ordered locus">SSON_0692</name>
</gene>
<sequence length="430" mass="45956">MKQALRVAFGFLILWASVLHAEVRIVIDSGVDSGRPIGVVPFQWAGPGAAPEDIGGIVAADLRNSGKFNPLDRARLPQQPGSAQEVQPAAWSALGIDAVVVGQVTPNPDGSYNVAYQLVDTGGAPGTVLAQNSYKVNKQWLRYAGHTASDEVFEKLTGIKGAFRTRIAYVVQTNGGQFPYELRVSDYDGYNQFVVHRSPQPLMSPAWSPDGSKLAYVTFESGRSALVIQTLANGAVRQVASFPRHNGAPAFSPDGSKLAFALSKTGSLNLYVMDLASGQIRQVTDGRSNNTEPTWFPDSQNLAFTSDQAGRPQVYKVNINGGAPQRITWEGSQNQDADVSSDGKFMVMVSSNGGQQHIAKQDLATGGVQVLSSTFLDETPSLAPNGTMVIYSSSQGMGSVLNLVSTDGRFKARLPATDGQVKFPAWSPYL</sequence>
<proteinExistence type="inferred from homology"/>
<organism>
    <name type="scientific">Shigella sonnei (strain Ss046)</name>
    <dbReference type="NCBI Taxonomy" id="300269"/>
    <lineage>
        <taxon>Bacteria</taxon>
        <taxon>Pseudomonadati</taxon>
        <taxon>Pseudomonadota</taxon>
        <taxon>Gammaproteobacteria</taxon>
        <taxon>Enterobacterales</taxon>
        <taxon>Enterobacteriaceae</taxon>
        <taxon>Shigella</taxon>
    </lineage>
</organism>
<accession>Q3Z464</accession>